<gene>
    <name evidence="8 12" type="primary">FUT11</name>
    <name evidence="9" type="synonym">POFUT4</name>
</gene>
<accession>Q495W5</accession>
<accession>Q495W7</accession>
<accession>Q8IYE4</accession>
<comment type="function">
    <text evidence="4 6">Protein O-fucosyltransferase that specifically catalyzes O-fucosylation of serine or threonine residues in EMI domains of target proteins, such as MMRN1, MMRN2 and EMID1 (PubMed:39775168). Attaches fucose through an O-glycosidic linkage (PubMed:39775168). O-fucosylation of EMI domain-containing proteins may be required for facilitating protein folding and secretion (PubMed:39775168). Also shows minor alpha-(1,3)-fucosyltransferase activity toward activity toward biantennary N-glycan acceptors (PubMed:19088067). However, this was tested with a library of synthetic substrates and this activity is unsure in vivo (PubMed:19088067).</text>
</comment>
<comment type="catalytic activity">
    <reaction evidence="6">
        <text>L-threonyl-[protein] + GDP-beta-L-fucose = 3-O-(alpha-L-fucosyl)-L-threonyl-[protein] + GDP + H(+)</text>
        <dbReference type="Rhea" id="RHEA:70491"/>
        <dbReference type="Rhea" id="RHEA-COMP:11060"/>
        <dbReference type="Rhea" id="RHEA-COMP:17915"/>
        <dbReference type="ChEBI" id="CHEBI:15378"/>
        <dbReference type="ChEBI" id="CHEBI:30013"/>
        <dbReference type="ChEBI" id="CHEBI:57273"/>
        <dbReference type="ChEBI" id="CHEBI:58189"/>
        <dbReference type="ChEBI" id="CHEBI:189631"/>
        <dbReference type="EC" id="2.4.1.221"/>
    </reaction>
    <physiologicalReaction direction="left-to-right" evidence="6">
        <dbReference type="Rhea" id="RHEA:70492"/>
    </physiologicalReaction>
</comment>
<comment type="catalytic activity">
    <reaction evidence="6">
        <text>L-seryl-[protein] + GDP-beta-L-fucose = 3-O-(alpha-L-fucosyl)-L-seryl-[protein] + GDP + H(+)</text>
        <dbReference type="Rhea" id="RHEA:63644"/>
        <dbReference type="Rhea" id="RHEA-COMP:9863"/>
        <dbReference type="Rhea" id="RHEA-COMP:17914"/>
        <dbReference type="ChEBI" id="CHEBI:15378"/>
        <dbReference type="ChEBI" id="CHEBI:29999"/>
        <dbReference type="ChEBI" id="CHEBI:57273"/>
        <dbReference type="ChEBI" id="CHEBI:58189"/>
        <dbReference type="ChEBI" id="CHEBI:189632"/>
        <dbReference type="EC" id="2.4.1.221"/>
    </reaction>
    <physiologicalReaction direction="left-to-right" evidence="6">
        <dbReference type="Rhea" id="RHEA:63645"/>
    </physiologicalReaction>
</comment>
<comment type="biophysicochemical properties">
    <kinetics>
        <KM evidence="6">6.738 uM for Thr-216 of MMRN1 protein</KM>
        <KM evidence="6">0.999 uM for Thr-265 of MMRN1 protein</KM>
        <Vmax evidence="6">48.92 nmol/min/mg enzyme with Thr-216 of MMRN1 protein as substrate</Vmax>
        <Vmax evidence="6">5.786 nmol/min/mg enzyme with Thr-265 of MMRN1 protein as substrate</Vmax>
    </kinetics>
</comment>
<comment type="pathway">
    <text evidence="6 11">Protein modification; protein glycosylation.</text>
</comment>
<comment type="interaction">
    <interactant intactId="EBI-2907712">
        <id>Q495W5</id>
    </interactant>
    <interactant intactId="EBI-748397">
        <id>P50222</id>
        <label>MEOX2</label>
    </interactant>
    <organismsDiffer>false</organismsDiffer>
    <experiments>3</experiments>
</comment>
<comment type="interaction">
    <interactant intactId="EBI-2907712">
        <id>Q495W5</id>
    </interactant>
    <interactant intactId="EBI-307352">
        <id>Q04864</id>
        <label>REL</label>
    </interactant>
    <organismsDiffer>false</organismsDiffer>
    <experiments>3</experiments>
</comment>
<comment type="subcellular location">
    <subcellularLocation>
        <location evidence="6">Endoplasmic reticulum membrane</location>
        <topology evidence="2">Single-pass type II membrane protein</topology>
    </subcellularLocation>
</comment>
<comment type="alternative products">
    <event type="alternative splicing"/>
    <isoform>
        <id>Q495W5-1</id>
        <name>1</name>
        <sequence type="displayed"/>
    </isoform>
    <isoform>
        <id>Q495W5-2</id>
        <name>2</name>
        <sequence type="described" ref="VSP_027511"/>
    </isoform>
</comment>
<comment type="similarity">
    <text evidence="10">Belongs to the glycosyltransferase 10 family.</text>
</comment>
<comment type="online information" name="Functional Glycomics Gateway - GTase">
    <link uri="http://www.functionalglycomics.org/glycomics/molecule/jsp/glycoEnzyme/viewGlycoEnzyme.jsp?gbpId=gt_hum_608"/>
    <text>Fucosyltransferase 11</text>
</comment>
<organism>
    <name type="scientific">Homo sapiens</name>
    <name type="common">Human</name>
    <dbReference type="NCBI Taxonomy" id="9606"/>
    <lineage>
        <taxon>Eukaryota</taxon>
        <taxon>Metazoa</taxon>
        <taxon>Chordata</taxon>
        <taxon>Craniata</taxon>
        <taxon>Vertebrata</taxon>
        <taxon>Euteleostomi</taxon>
        <taxon>Mammalia</taxon>
        <taxon>Eutheria</taxon>
        <taxon>Euarchontoglires</taxon>
        <taxon>Primates</taxon>
        <taxon>Haplorrhini</taxon>
        <taxon>Catarrhini</taxon>
        <taxon>Hominidae</taxon>
        <taxon>Homo</taxon>
    </lineage>
</organism>
<feature type="chain" id="PRO_0000299009" description="GDP-fucose protein O-fucosyltransferase 4">
    <location>
        <begin position="1"/>
        <end position="492"/>
    </location>
</feature>
<feature type="topological domain" description="Cytoplasmic" evidence="2">
    <location>
        <begin position="1"/>
        <end position="7"/>
    </location>
</feature>
<feature type="transmembrane region" description="Helical; Signal-anchor for type II membrane protein" evidence="2">
    <location>
        <begin position="8"/>
        <end position="24"/>
    </location>
</feature>
<feature type="topological domain" description="Lumenal" evidence="2">
    <location>
        <begin position="25"/>
        <end position="492"/>
    </location>
</feature>
<feature type="glycosylation site" description="N-linked (GlcNAc...) asparagine" evidence="2">
    <location>
        <position position="166"/>
    </location>
</feature>
<feature type="glycosylation site" description="N-linked (GlcNAc...) asparagine" evidence="5">
    <location>
        <position position="443"/>
    </location>
</feature>
<feature type="disulfide bond" evidence="1">
    <location>
        <begin position="389"/>
        <end position="392"/>
    </location>
</feature>
<feature type="splice variant" id="VSP_027511" description="In isoform 2." evidence="7">
    <original>WKEMWLQDYWQGLDQGEALTAMIHNNETEQTKFWDYLHEIFMKRQHL</original>
    <variation>SLVQVRDHCICLRFLWPHSEKGRTHNYAAVP</variation>
    <location>
        <begin position="446"/>
        <end position="492"/>
    </location>
</feature>
<feature type="sequence variant" id="VAR_034763" description="In dbSNP:rs17853514." evidence="3">
    <original>S</original>
    <variation>A</variation>
    <location>
        <position position="51"/>
    </location>
</feature>
<proteinExistence type="evidence at protein level"/>
<name>OFUT4_HUMAN</name>
<reference key="1">
    <citation type="journal article" date="2004" name="Genome Res.">
        <title>The status, quality, and expansion of the NIH full-length cDNA project: the Mammalian Gene Collection (MGC).</title>
        <authorList>
            <consortium name="The MGC Project Team"/>
        </authorList>
    </citation>
    <scope>NUCLEOTIDE SEQUENCE [LARGE SCALE MRNA] (ISOFORMS 1 AND 2)</scope>
    <scope>VARIANT ALA-51</scope>
    <source>
        <tissue>Testis</tissue>
    </source>
</reference>
<reference key="2">
    <citation type="journal article" date="2009" name="J. Proteome Res.">
        <title>Glycoproteomics analysis of human liver tissue by combination of multiple enzyme digestion and hydrazide chemistry.</title>
        <authorList>
            <person name="Chen R."/>
            <person name="Jiang X."/>
            <person name="Sun D."/>
            <person name="Han G."/>
            <person name="Wang F."/>
            <person name="Ye M."/>
            <person name="Wang L."/>
            <person name="Zou H."/>
        </authorList>
    </citation>
    <scope>GLYCOSYLATION [LARGE SCALE ANALYSIS] AT ASN-443</scope>
    <source>
        <tissue>Liver</tissue>
    </source>
</reference>
<reference key="3">
    <citation type="journal article" date="2009" name="J. Biol. Chem.">
        <title>Activity, splice variants, conserved peptide motifs, and phylogeny of two new alpha1,3-fucosyltransferase families (FUT10 and FUT11).</title>
        <authorList>
            <person name="Mollicone R."/>
            <person name="Moore S.E."/>
            <person name="Bovin N."/>
            <person name="Garcia-Rosasco M."/>
            <person name="Candelier J.J."/>
            <person name="Martinez-Duncker I."/>
            <person name="Oriol R."/>
        </authorList>
    </citation>
    <scope>FUNCTION</scope>
    <scope>PATHWAY</scope>
</reference>
<reference key="4">
    <citation type="journal article" date="2025" name="Nat. Chem. Biol.">
        <title>FUT10 and FUT11 are protein O-fucosyltransferases that modify protein EMI domains.</title>
        <authorList>
            <person name="Hao H."/>
            <person name="Yuan Y."/>
            <person name="Ito A."/>
            <person name="Eberand B.M."/>
            <person name="Tjondro H."/>
            <person name="Cielesh M."/>
            <person name="Norris N."/>
            <person name="Moreno C.L."/>
            <person name="Maxwell J.W.C."/>
            <person name="Neely G.G."/>
            <person name="Payne R.J."/>
            <person name="Kebede M.A."/>
            <person name="Urbauer R.J.B."/>
            <person name="Passam F.H."/>
            <person name="Larance M."/>
            <person name="Haltiwanger R.S."/>
        </authorList>
    </citation>
    <scope>FUNCTION</scope>
    <scope>CATALYTIC ACTIVITY</scope>
    <scope>BIOPHYSICOCHEMICAL PROPERTIES</scope>
    <scope>PATHWAY</scope>
    <scope>SUBCELLULAR LOCATION</scope>
</reference>
<sequence length="492" mass="55816">MAAGPIRVVLVLLGVLSVCAASGHGSVAEREAGGEAEWAEPWDGAVFRPPSALGAVGVTRSSGTPRPGREEAGDLPVLLWWSPGLFPHFPGDSERIECARGACVASRNRRALRDSRTRALLFYGTDFRASAAPLPRLAHQSWALLHEESPLNNFLLSHGPGIRLFNLTSTFSRHSDYPLSLQWLPGTAYLRRPVPPPMERAEWRRRGYAPLLYLQSHCDVPADRDRYVRELMRHIPVDSYGKCLQNRELPTARLQDTATATTEDPELLAFLSRYKFHLALENAICNDYMTEKLWRPMHLGAVPVYRGSPSVRDWMPNNHSVILIDDFESPQKLAEFIDFLDKNDEEYMKYLAYKQPGGITNQFLLDSLKHREWGVNDPLLPNYLNGFECFVCDYELARLDAEKAHAASPGDSPVFEPHIAQPSHMDCPVPTPGFGNVEEIPENDSWKEMWLQDYWQGLDQGEALTAMIHNNETEQTKFWDYLHEIFMKRQHL</sequence>
<keyword id="KW-0025">Alternative splicing</keyword>
<keyword id="KW-1015">Disulfide bond</keyword>
<keyword id="KW-0256">Endoplasmic reticulum</keyword>
<keyword id="KW-0325">Glycoprotein</keyword>
<keyword id="KW-0328">Glycosyltransferase</keyword>
<keyword id="KW-0472">Membrane</keyword>
<keyword id="KW-1267">Proteomics identification</keyword>
<keyword id="KW-1185">Reference proteome</keyword>
<keyword id="KW-0735">Signal-anchor</keyword>
<keyword id="KW-0808">Transferase</keyword>
<keyword id="KW-0812">Transmembrane</keyword>
<keyword id="KW-1133">Transmembrane helix</keyword>
<protein>
    <recommendedName>
        <fullName evidence="10">GDP-fucose protein O-fucosyltransferase 4</fullName>
        <ecNumber evidence="6">2.4.1.221</ecNumber>
    </recommendedName>
    <alternativeName>
        <fullName>Alpha-(1,3)-fucosyltransferase 11</fullName>
        <ecNumber evidence="4">2.4.1.-</ecNumber>
    </alternativeName>
    <alternativeName>
        <fullName>Fucosyltransferase XI</fullName>
        <shortName>Fuc-TXI</shortName>
        <shortName>FucT-XI</shortName>
    </alternativeName>
    <alternativeName>
        <fullName>Galactoside 3-L-fucosyltransferase 11</fullName>
        <shortName>Fucosyltransferase 11</shortName>
    </alternativeName>
</protein>
<dbReference type="EC" id="2.4.1.221" evidence="6"/>
<dbReference type="EC" id="2.4.1.-" evidence="4"/>
<dbReference type="EMBL" id="BC036037">
    <property type="protein sequence ID" value="AAH36037.1"/>
    <property type="molecule type" value="mRNA"/>
</dbReference>
<dbReference type="EMBL" id="BC100994">
    <property type="protein sequence ID" value="AAI00995.1"/>
    <property type="molecule type" value="mRNA"/>
</dbReference>
<dbReference type="EMBL" id="BC100995">
    <property type="protein sequence ID" value="AAI00996.1"/>
    <property type="molecule type" value="mRNA"/>
</dbReference>
<dbReference type="EMBL" id="BC100996">
    <property type="protein sequence ID" value="AAI00997.1"/>
    <property type="molecule type" value="mRNA"/>
</dbReference>
<dbReference type="EMBL" id="BC100997">
    <property type="protein sequence ID" value="AAI00998.1"/>
    <property type="molecule type" value="mRNA"/>
</dbReference>
<dbReference type="CCDS" id="CCDS60558.1">
    <molecule id="Q495W5-2"/>
</dbReference>
<dbReference type="CCDS" id="CCDS7333.1">
    <molecule id="Q495W5-1"/>
</dbReference>
<dbReference type="RefSeq" id="NP_001271123.1">
    <molecule id="Q495W5-2"/>
    <property type="nucleotide sequence ID" value="NM_001284194.2"/>
</dbReference>
<dbReference type="RefSeq" id="NP_775811.2">
    <molecule id="Q495W5-1"/>
    <property type="nucleotide sequence ID" value="NM_173540.3"/>
</dbReference>
<dbReference type="SMR" id="Q495W5"/>
<dbReference type="BioGRID" id="128001">
    <property type="interactions" value="130"/>
</dbReference>
<dbReference type="FunCoup" id="Q495W5">
    <property type="interactions" value="2013"/>
</dbReference>
<dbReference type="IntAct" id="Q495W5">
    <property type="interactions" value="72"/>
</dbReference>
<dbReference type="STRING" id="9606.ENSP00000361932"/>
<dbReference type="CAZy" id="GT10">
    <property type="family name" value="Glycosyltransferase Family 10"/>
</dbReference>
<dbReference type="GlyCosmos" id="Q495W5">
    <property type="glycosylation" value="2 sites, No reported glycans"/>
</dbReference>
<dbReference type="GlyGen" id="Q495W5">
    <property type="glycosylation" value="8 sites, 8 N-linked glycans (2 sites), 2 O-linked glycans (3 sites)"/>
</dbReference>
<dbReference type="iPTMnet" id="Q495W5"/>
<dbReference type="PhosphoSitePlus" id="Q495W5"/>
<dbReference type="BioMuta" id="FUT11"/>
<dbReference type="DMDM" id="121943313"/>
<dbReference type="jPOST" id="Q495W5"/>
<dbReference type="MassIVE" id="Q495W5"/>
<dbReference type="PaxDb" id="9606-ENSP00000361932"/>
<dbReference type="PeptideAtlas" id="Q495W5"/>
<dbReference type="ProteomicsDB" id="61975">
    <molecule id="Q495W5-1"/>
</dbReference>
<dbReference type="ProteomicsDB" id="61976">
    <molecule id="Q495W5-2"/>
</dbReference>
<dbReference type="Pumba" id="Q495W5"/>
<dbReference type="Antibodypedia" id="2883">
    <property type="antibodies" value="130 antibodies from 21 providers"/>
</dbReference>
<dbReference type="DNASU" id="170384"/>
<dbReference type="Ensembl" id="ENST00000372841.8">
    <molecule id="Q495W5-1"/>
    <property type="protein sequence ID" value="ENSP00000361932.3"/>
    <property type="gene ID" value="ENSG00000196968.11"/>
</dbReference>
<dbReference type="Ensembl" id="ENST00000394790.2">
    <molecule id="Q495W5-2"/>
    <property type="protein sequence ID" value="ENSP00000378270.1"/>
    <property type="gene ID" value="ENSG00000196968.11"/>
</dbReference>
<dbReference type="GeneID" id="170384"/>
<dbReference type="KEGG" id="hsa:170384"/>
<dbReference type="MANE-Select" id="ENST00000372841.8">
    <property type="protein sequence ID" value="ENSP00000361932.3"/>
    <property type="RefSeq nucleotide sequence ID" value="NM_173540.3"/>
    <property type="RefSeq protein sequence ID" value="NP_775811.2"/>
</dbReference>
<dbReference type="UCSC" id="uc001juz.3">
    <molecule id="Q495W5-1"/>
    <property type="organism name" value="human"/>
</dbReference>
<dbReference type="AGR" id="HGNC:19233"/>
<dbReference type="CTD" id="170384"/>
<dbReference type="DisGeNET" id="170384"/>
<dbReference type="GeneCards" id="FUT11"/>
<dbReference type="HGNC" id="HGNC:19233">
    <property type="gene designation" value="FUT11"/>
</dbReference>
<dbReference type="HPA" id="ENSG00000196968">
    <property type="expression patterns" value="Low tissue specificity"/>
</dbReference>
<dbReference type="neXtProt" id="NX_Q495W5"/>
<dbReference type="OpenTargets" id="ENSG00000196968"/>
<dbReference type="PharmGKB" id="PA134914077"/>
<dbReference type="VEuPathDB" id="HostDB:ENSG00000196968"/>
<dbReference type="eggNOG" id="KOG2619">
    <property type="taxonomic scope" value="Eukaryota"/>
</dbReference>
<dbReference type="GeneTree" id="ENSGT00940000158983"/>
<dbReference type="HOGENOM" id="CLU_032075_0_1_1"/>
<dbReference type="InParanoid" id="Q495W5"/>
<dbReference type="OMA" id="EHREWGV"/>
<dbReference type="OrthoDB" id="9993460at2759"/>
<dbReference type="PAN-GO" id="Q495W5">
    <property type="GO annotations" value="2 GO annotations based on evolutionary models"/>
</dbReference>
<dbReference type="PhylomeDB" id="Q495W5"/>
<dbReference type="TreeFam" id="TF316348"/>
<dbReference type="BRENDA" id="2.4.1.152">
    <property type="organism ID" value="2681"/>
</dbReference>
<dbReference type="BRENDA" id="2.4.1.65">
    <property type="organism ID" value="2681"/>
</dbReference>
<dbReference type="PathwayCommons" id="Q495W5"/>
<dbReference type="Reactome" id="R-HSA-9037629">
    <property type="pathway name" value="Lewis blood group biosynthesis"/>
</dbReference>
<dbReference type="SignaLink" id="Q495W5"/>
<dbReference type="UniPathway" id="UPA00378"/>
<dbReference type="BioGRID-ORCS" id="170384">
    <property type="hits" value="38 hits in 1157 CRISPR screens"/>
</dbReference>
<dbReference type="ChiTaRS" id="FUT11">
    <property type="organism name" value="human"/>
</dbReference>
<dbReference type="GenomeRNAi" id="170384"/>
<dbReference type="Pharos" id="Q495W5">
    <property type="development level" value="Tbio"/>
</dbReference>
<dbReference type="PRO" id="PR:Q495W5"/>
<dbReference type="Proteomes" id="UP000005640">
    <property type="component" value="Chromosome 10"/>
</dbReference>
<dbReference type="RNAct" id="Q495W5">
    <property type="molecule type" value="protein"/>
</dbReference>
<dbReference type="Bgee" id="ENSG00000196968">
    <property type="expression patterns" value="Expressed in sperm and 182 other cell types or tissues"/>
</dbReference>
<dbReference type="GO" id="GO:0005783">
    <property type="term" value="C:endoplasmic reticulum"/>
    <property type="evidence" value="ECO:0000314"/>
    <property type="project" value="UniProtKB"/>
</dbReference>
<dbReference type="GO" id="GO:0005789">
    <property type="term" value="C:endoplasmic reticulum membrane"/>
    <property type="evidence" value="ECO:0007669"/>
    <property type="project" value="UniProtKB-SubCell"/>
</dbReference>
<dbReference type="GO" id="GO:0000139">
    <property type="term" value="C:Golgi membrane"/>
    <property type="evidence" value="ECO:0007669"/>
    <property type="project" value="InterPro"/>
</dbReference>
<dbReference type="GO" id="GO:0046920">
    <property type="term" value="F:alpha-(1-&gt;3)-fucosyltransferase activity"/>
    <property type="evidence" value="ECO:0000318"/>
    <property type="project" value="GO_Central"/>
</dbReference>
<dbReference type="GO" id="GO:0008417">
    <property type="term" value="F:fucosyltransferase activity"/>
    <property type="evidence" value="ECO:0000314"/>
    <property type="project" value="UniProtKB"/>
</dbReference>
<dbReference type="GO" id="GO:0046922">
    <property type="term" value="F:peptide-O-fucosyltransferase activity"/>
    <property type="evidence" value="ECO:0000314"/>
    <property type="project" value="UniProtKB"/>
</dbReference>
<dbReference type="GO" id="GO:0036065">
    <property type="term" value="P:fucosylation"/>
    <property type="evidence" value="ECO:0000318"/>
    <property type="project" value="GO_Central"/>
</dbReference>
<dbReference type="GO" id="GO:0036071">
    <property type="term" value="P:N-glycan fucosylation"/>
    <property type="evidence" value="ECO:0000314"/>
    <property type="project" value="UniProtKB"/>
</dbReference>
<dbReference type="GO" id="GO:0050714">
    <property type="term" value="P:positive regulation of protein secretion"/>
    <property type="evidence" value="ECO:0000314"/>
    <property type="project" value="UniProtKB"/>
</dbReference>
<dbReference type="FunFam" id="3.40.50.11660:FF:000002">
    <property type="entry name" value="Alpha-(1,3)-fucosyltransferase"/>
    <property type="match status" value="1"/>
</dbReference>
<dbReference type="Gene3D" id="3.40.50.11660">
    <property type="entry name" value="Glycosyl transferase family 10, C-terminal domain"/>
    <property type="match status" value="1"/>
</dbReference>
<dbReference type="InterPro" id="IPR017176">
    <property type="entry name" value="Alpha-1_3-FUT_met"/>
</dbReference>
<dbReference type="InterPro" id="IPR055270">
    <property type="entry name" value="Glyco_tran_10_C"/>
</dbReference>
<dbReference type="InterPro" id="IPR031481">
    <property type="entry name" value="Glyco_tran_10_N"/>
</dbReference>
<dbReference type="InterPro" id="IPR001503">
    <property type="entry name" value="Glyco_trans_10"/>
</dbReference>
<dbReference type="InterPro" id="IPR038577">
    <property type="entry name" value="GT10-like_C_sf"/>
</dbReference>
<dbReference type="PANTHER" id="PTHR11929">
    <property type="entry name" value="ALPHA- 1,3 -FUCOSYLTRANSFERASE"/>
    <property type="match status" value="1"/>
</dbReference>
<dbReference type="PANTHER" id="PTHR11929:SF198">
    <property type="entry name" value="ALPHA-(1,3)-FUCOSYLTRANSFERASE 11"/>
    <property type="match status" value="1"/>
</dbReference>
<dbReference type="Pfam" id="PF17039">
    <property type="entry name" value="Glyco_tran_10_N"/>
    <property type="match status" value="1"/>
</dbReference>
<dbReference type="Pfam" id="PF00852">
    <property type="entry name" value="Glyco_transf_10"/>
    <property type="match status" value="1"/>
</dbReference>
<dbReference type="PIRSF" id="PIRSF037332">
    <property type="entry name" value="Alpha1_3FUT_met"/>
    <property type="match status" value="1"/>
</dbReference>
<dbReference type="SUPFAM" id="SSF53756">
    <property type="entry name" value="UDP-Glycosyltransferase/glycogen phosphorylase"/>
    <property type="match status" value="1"/>
</dbReference>
<evidence type="ECO:0000250" key="1">
    <source>
        <dbReference type="UniProtKB" id="Q11130"/>
    </source>
</evidence>
<evidence type="ECO:0000255" key="2"/>
<evidence type="ECO:0000269" key="3">
    <source>
    </source>
</evidence>
<evidence type="ECO:0000269" key="4">
    <source>
    </source>
</evidence>
<evidence type="ECO:0000269" key="5">
    <source>
    </source>
</evidence>
<evidence type="ECO:0000269" key="6">
    <source>
    </source>
</evidence>
<evidence type="ECO:0000303" key="7">
    <source>
    </source>
</evidence>
<evidence type="ECO:0000303" key="8">
    <source>
    </source>
</evidence>
<evidence type="ECO:0000303" key="9">
    <source>
    </source>
</evidence>
<evidence type="ECO:0000305" key="10"/>
<evidence type="ECO:0000305" key="11">
    <source>
    </source>
</evidence>
<evidence type="ECO:0000312" key="12">
    <source>
        <dbReference type="HGNC" id="HGNC:19233"/>
    </source>
</evidence>